<gene>
    <name evidence="1" type="primary">pyrB</name>
    <name type="ordered locus">LS215_1626</name>
</gene>
<name>PYRB_SACI2</name>
<reference key="1">
    <citation type="journal article" date="2009" name="Proc. Natl. Acad. Sci. U.S.A.">
        <title>Biogeography of the Sulfolobus islandicus pan-genome.</title>
        <authorList>
            <person name="Reno M.L."/>
            <person name="Held N.L."/>
            <person name="Fields C.J."/>
            <person name="Burke P.V."/>
            <person name="Whitaker R.J."/>
        </authorList>
    </citation>
    <scope>NUCLEOTIDE SEQUENCE [LARGE SCALE GENOMIC DNA]</scope>
    <source>
        <strain>L.S.2.15 / Lassen #1</strain>
    </source>
</reference>
<evidence type="ECO:0000255" key="1">
    <source>
        <dbReference type="HAMAP-Rule" id="MF_00001"/>
    </source>
</evidence>
<feature type="chain" id="PRO_1000201603" description="Aspartate carbamoyltransferase catalytic subunit">
    <location>
        <begin position="1"/>
        <end position="303"/>
    </location>
</feature>
<feature type="binding site" evidence="1">
    <location>
        <position position="51"/>
    </location>
    <ligand>
        <name>carbamoyl phosphate</name>
        <dbReference type="ChEBI" id="CHEBI:58228"/>
    </ligand>
</feature>
<feature type="binding site" evidence="1">
    <location>
        <position position="52"/>
    </location>
    <ligand>
        <name>carbamoyl phosphate</name>
        <dbReference type="ChEBI" id="CHEBI:58228"/>
    </ligand>
</feature>
<feature type="binding site" evidence="1">
    <location>
        <position position="80"/>
    </location>
    <ligand>
        <name>L-aspartate</name>
        <dbReference type="ChEBI" id="CHEBI:29991"/>
    </ligand>
</feature>
<feature type="binding site" evidence="1">
    <location>
        <position position="101"/>
    </location>
    <ligand>
        <name>carbamoyl phosphate</name>
        <dbReference type="ChEBI" id="CHEBI:58228"/>
    </ligand>
</feature>
<feature type="binding site" evidence="1">
    <location>
        <position position="129"/>
    </location>
    <ligand>
        <name>carbamoyl phosphate</name>
        <dbReference type="ChEBI" id="CHEBI:58228"/>
    </ligand>
</feature>
<feature type="binding site" evidence="1">
    <location>
        <position position="132"/>
    </location>
    <ligand>
        <name>carbamoyl phosphate</name>
        <dbReference type="ChEBI" id="CHEBI:58228"/>
    </ligand>
</feature>
<feature type="binding site" evidence="1">
    <location>
        <position position="162"/>
    </location>
    <ligand>
        <name>L-aspartate</name>
        <dbReference type="ChEBI" id="CHEBI:29991"/>
    </ligand>
</feature>
<feature type="binding site" evidence="1">
    <location>
        <position position="221"/>
    </location>
    <ligand>
        <name>L-aspartate</name>
        <dbReference type="ChEBI" id="CHEBI:29991"/>
    </ligand>
</feature>
<feature type="binding site" evidence="1">
    <location>
        <position position="260"/>
    </location>
    <ligand>
        <name>carbamoyl phosphate</name>
        <dbReference type="ChEBI" id="CHEBI:58228"/>
    </ligand>
</feature>
<feature type="binding site" evidence="1">
    <location>
        <position position="261"/>
    </location>
    <ligand>
        <name>carbamoyl phosphate</name>
        <dbReference type="ChEBI" id="CHEBI:58228"/>
    </ligand>
</feature>
<organism>
    <name type="scientific">Saccharolobus islandicus (strain L.S.2.15 / Lassen #1)</name>
    <name type="common">Sulfolobus islandicus</name>
    <dbReference type="NCBI Taxonomy" id="429572"/>
    <lineage>
        <taxon>Archaea</taxon>
        <taxon>Thermoproteota</taxon>
        <taxon>Thermoprotei</taxon>
        <taxon>Sulfolobales</taxon>
        <taxon>Sulfolobaceae</taxon>
        <taxon>Saccharolobus</taxon>
    </lineage>
</organism>
<accession>C3MQG7</accession>
<dbReference type="EC" id="2.1.3.2" evidence="1"/>
<dbReference type="EMBL" id="CP001399">
    <property type="protein sequence ID" value="ACP35630.1"/>
    <property type="molecule type" value="Genomic_DNA"/>
</dbReference>
<dbReference type="RefSeq" id="WP_012713800.1">
    <property type="nucleotide sequence ID" value="NC_012589.1"/>
</dbReference>
<dbReference type="SMR" id="C3MQG7"/>
<dbReference type="GeneID" id="7808006"/>
<dbReference type="GeneID" id="7810099"/>
<dbReference type="KEGG" id="sis:LS215_1626"/>
<dbReference type="HOGENOM" id="CLU_043846_1_2_2"/>
<dbReference type="OrthoDB" id="7792at2157"/>
<dbReference type="UniPathway" id="UPA00070">
    <property type="reaction ID" value="UER00116"/>
</dbReference>
<dbReference type="Proteomes" id="UP000001747">
    <property type="component" value="Chromosome"/>
</dbReference>
<dbReference type="GO" id="GO:0016597">
    <property type="term" value="F:amino acid binding"/>
    <property type="evidence" value="ECO:0007669"/>
    <property type="project" value="InterPro"/>
</dbReference>
<dbReference type="GO" id="GO:0004070">
    <property type="term" value="F:aspartate carbamoyltransferase activity"/>
    <property type="evidence" value="ECO:0007669"/>
    <property type="project" value="UniProtKB-UniRule"/>
</dbReference>
<dbReference type="GO" id="GO:0006207">
    <property type="term" value="P:'de novo' pyrimidine nucleobase biosynthetic process"/>
    <property type="evidence" value="ECO:0007669"/>
    <property type="project" value="InterPro"/>
</dbReference>
<dbReference type="GO" id="GO:0044205">
    <property type="term" value="P:'de novo' UMP biosynthetic process"/>
    <property type="evidence" value="ECO:0007669"/>
    <property type="project" value="UniProtKB-UniRule"/>
</dbReference>
<dbReference type="GO" id="GO:0006520">
    <property type="term" value="P:amino acid metabolic process"/>
    <property type="evidence" value="ECO:0007669"/>
    <property type="project" value="InterPro"/>
</dbReference>
<dbReference type="FunFam" id="3.40.50.1370:FF:000021">
    <property type="entry name" value="Aspartate carbamoyltransferase"/>
    <property type="match status" value="1"/>
</dbReference>
<dbReference type="Gene3D" id="3.40.50.1370">
    <property type="entry name" value="Aspartate/ornithine carbamoyltransferase"/>
    <property type="match status" value="2"/>
</dbReference>
<dbReference type="HAMAP" id="MF_00001">
    <property type="entry name" value="Asp_carb_tr"/>
    <property type="match status" value="1"/>
</dbReference>
<dbReference type="InterPro" id="IPR006132">
    <property type="entry name" value="Asp/Orn_carbamoyltranf_P-bd"/>
</dbReference>
<dbReference type="InterPro" id="IPR006130">
    <property type="entry name" value="Asp/Orn_carbamoylTrfase"/>
</dbReference>
<dbReference type="InterPro" id="IPR036901">
    <property type="entry name" value="Asp/Orn_carbamoylTrfase_sf"/>
</dbReference>
<dbReference type="InterPro" id="IPR002082">
    <property type="entry name" value="Asp_carbamoyltransf"/>
</dbReference>
<dbReference type="InterPro" id="IPR006131">
    <property type="entry name" value="Asp_carbamoyltransf_Asp/Orn-bd"/>
</dbReference>
<dbReference type="NCBIfam" id="TIGR00670">
    <property type="entry name" value="asp_carb_tr"/>
    <property type="match status" value="1"/>
</dbReference>
<dbReference type="NCBIfam" id="NF002032">
    <property type="entry name" value="PRK00856.1"/>
    <property type="match status" value="1"/>
</dbReference>
<dbReference type="PANTHER" id="PTHR45753:SF6">
    <property type="entry name" value="ASPARTATE CARBAMOYLTRANSFERASE"/>
    <property type="match status" value="1"/>
</dbReference>
<dbReference type="PANTHER" id="PTHR45753">
    <property type="entry name" value="ORNITHINE CARBAMOYLTRANSFERASE, MITOCHONDRIAL"/>
    <property type="match status" value="1"/>
</dbReference>
<dbReference type="Pfam" id="PF00185">
    <property type="entry name" value="OTCace"/>
    <property type="match status" value="1"/>
</dbReference>
<dbReference type="Pfam" id="PF02729">
    <property type="entry name" value="OTCace_N"/>
    <property type="match status" value="1"/>
</dbReference>
<dbReference type="PRINTS" id="PR00100">
    <property type="entry name" value="AOTCASE"/>
</dbReference>
<dbReference type="PRINTS" id="PR00101">
    <property type="entry name" value="ATCASE"/>
</dbReference>
<dbReference type="SUPFAM" id="SSF53671">
    <property type="entry name" value="Aspartate/ornithine carbamoyltransferase"/>
    <property type="match status" value="1"/>
</dbReference>
<dbReference type="PROSITE" id="PS00097">
    <property type="entry name" value="CARBAMOYLTRANSFERASE"/>
    <property type="match status" value="1"/>
</dbReference>
<sequence>MRLRHVVSSLDLTRDDYFRIFELADKFSNVKKLNYLSGKVVSLAFFEPSTRTAQSFHTAAIKLGADVIGFASEESTSIAKGENLADTIRMLNNYSNCIVMRHKFDGAALFASEISDIPIINAGDGKHEHPTQALIDLYTIYKVFGEIDGRTFGLLGDLKYARTVNSLLRALTRFKPKKVFLISPSQLKVRREILDGLNYPVIETENPYDVIQDIDVLYVTRIQKERFVDEVEYEKVKESYVVDLKLVNMMKKDGIILHPLPRVTEIDRKVDKTTNAKYFYQASLAVPVRMALFYEVLGERKDD</sequence>
<keyword id="KW-0665">Pyrimidine biosynthesis</keyword>
<keyword id="KW-0808">Transferase</keyword>
<proteinExistence type="inferred from homology"/>
<comment type="function">
    <text evidence="1">Catalyzes the condensation of carbamoyl phosphate and aspartate to form carbamoyl aspartate and inorganic phosphate, the committed step in the de novo pyrimidine nucleotide biosynthesis pathway.</text>
</comment>
<comment type="catalytic activity">
    <reaction evidence="1">
        <text>carbamoyl phosphate + L-aspartate = N-carbamoyl-L-aspartate + phosphate + H(+)</text>
        <dbReference type="Rhea" id="RHEA:20013"/>
        <dbReference type="ChEBI" id="CHEBI:15378"/>
        <dbReference type="ChEBI" id="CHEBI:29991"/>
        <dbReference type="ChEBI" id="CHEBI:32814"/>
        <dbReference type="ChEBI" id="CHEBI:43474"/>
        <dbReference type="ChEBI" id="CHEBI:58228"/>
        <dbReference type="EC" id="2.1.3.2"/>
    </reaction>
</comment>
<comment type="pathway">
    <text evidence="1">Pyrimidine metabolism; UMP biosynthesis via de novo pathway; (S)-dihydroorotate from bicarbonate: step 2/3.</text>
</comment>
<comment type="subunit">
    <text evidence="1">Heterooligomer of catalytic and regulatory chains.</text>
</comment>
<comment type="similarity">
    <text evidence="1">Belongs to the aspartate/ornithine carbamoyltransferase superfamily. ATCase family.</text>
</comment>
<protein>
    <recommendedName>
        <fullName evidence="1">Aspartate carbamoyltransferase catalytic subunit</fullName>
        <ecNumber evidence="1">2.1.3.2</ecNumber>
    </recommendedName>
    <alternativeName>
        <fullName evidence="1">Aspartate transcarbamylase</fullName>
        <shortName evidence="1">ATCase</shortName>
    </alternativeName>
</protein>